<proteinExistence type="inferred from homology"/>
<organism>
    <name type="scientific">Stutzerimonas stutzeri (strain A1501)</name>
    <name type="common">Pseudomonas stutzeri</name>
    <dbReference type="NCBI Taxonomy" id="379731"/>
    <lineage>
        <taxon>Bacteria</taxon>
        <taxon>Pseudomonadati</taxon>
        <taxon>Pseudomonadota</taxon>
        <taxon>Gammaproteobacteria</taxon>
        <taxon>Pseudomonadales</taxon>
        <taxon>Pseudomonadaceae</taxon>
        <taxon>Stutzerimonas</taxon>
    </lineage>
</organism>
<accession>A4VNV0</accession>
<comment type="function">
    <text evidence="1">Bidirectionally degrades single-stranded DNA into large acid-insoluble oligonucleotides, which are then degraded further into small acid-soluble oligonucleotides.</text>
</comment>
<comment type="catalytic activity">
    <reaction evidence="1">
        <text>Exonucleolytic cleavage in either 5'- to 3'- or 3'- to 5'-direction to yield nucleoside 5'-phosphates.</text>
        <dbReference type="EC" id="3.1.11.6"/>
    </reaction>
</comment>
<comment type="subunit">
    <text evidence="1">Heterooligomer composed of large and small subunits.</text>
</comment>
<comment type="subcellular location">
    <subcellularLocation>
        <location evidence="1">Cytoplasm</location>
    </subcellularLocation>
</comment>
<comment type="similarity">
    <text evidence="1">Belongs to the XseA family.</text>
</comment>
<sequence length="458" mass="50814">MLKDPFQRLNLDREVLTVSQLNGRARLLLEDVFAQVWVEGEISNLARPASGHVYFTLKDRNAQVRCALFRQNAARVRQALRDGLAVRVRGKVSLFEGRGDYQLILDMLEPAGDGALRLAFEALKEKLAAEGLFSAERKAALPAHPRRIGIVSSPTGAVIRDIISVFRRRAPQVELTLIPTAVQGREATGQIVRALQLADAQGFDALILARGGGSLEDLWCFNEEAVARAVDACVTPIVCAVGHETDVSIADFVADVRAPTPSAAAELLAPSSADLQQRLNGLQQRLVLRMRDRLHRDAMRLDGLTRRLRHPGERLQQQAQRIDDLEQRLLRALDRRLCSGQERLARLETRLAAQHPGRTLNLLRQRLDHLSSRLPRAMQANIKGRRQQLQGLAQTLNVVSPLATLSRGYSILLDDRGQAIRSASQTQPGQRLKARLGDGELDVRVEDNHLQPVTLPLL</sequence>
<keyword id="KW-0963">Cytoplasm</keyword>
<keyword id="KW-0269">Exonuclease</keyword>
<keyword id="KW-0378">Hydrolase</keyword>
<keyword id="KW-0540">Nuclease</keyword>
<keyword id="KW-1185">Reference proteome</keyword>
<feature type="chain" id="PRO_0000303811" description="Exodeoxyribonuclease 7 large subunit">
    <location>
        <begin position="1"/>
        <end position="458"/>
    </location>
</feature>
<protein>
    <recommendedName>
        <fullName evidence="1">Exodeoxyribonuclease 7 large subunit</fullName>
        <ecNumber evidence="1">3.1.11.6</ecNumber>
    </recommendedName>
    <alternativeName>
        <fullName evidence="1">Exodeoxyribonuclease VII large subunit</fullName>
        <shortName evidence="1">Exonuclease VII large subunit</shortName>
    </alternativeName>
</protein>
<reference key="1">
    <citation type="journal article" date="2008" name="Proc. Natl. Acad. Sci. U.S.A.">
        <title>Nitrogen fixation island and rhizosphere competence traits in the genome of root-associated Pseudomonas stutzeri A1501.</title>
        <authorList>
            <person name="Yan Y."/>
            <person name="Yang J."/>
            <person name="Dou Y."/>
            <person name="Chen M."/>
            <person name="Ping S."/>
            <person name="Peng J."/>
            <person name="Lu W."/>
            <person name="Zhang W."/>
            <person name="Yao Z."/>
            <person name="Li H."/>
            <person name="Liu W."/>
            <person name="He S."/>
            <person name="Geng L."/>
            <person name="Zhang X."/>
            <person name="Yang F."/>
            <person name="Yu H."/>
            <person name="Zhan Y."/>
            <person name="Li D."/>
            <person name="Lin Z."/>
            <person name="Wang Y."/>
            <person name="Elmerich C."/>
            <person name="Lin M."/>
            <person name="Jin Q."/>
        </authorList>
    </citation>
    <scope>NUCLEOTIDE SEQUENCE [LARGE SCALE GENOMIC DNA]</scope>
    <source>
        <strain>A1501</strain>
    </source>
</reference>
<evidence type="ECO:0000255" key="1">
    <source>
        <dbReference type="HAMAP-Rule" id="MF_00378"/>
    </source>
</evidence>
<gene>
    <name evidence="1" type="primary">xseA</name>
    <name type="ordered locus">PST_3010</name>
</gene>
<dbReference type="EC" id="3.1.11.6" evidence="1"/>
<dbReference type="EMBL" id="CP000304">
    <property type="protein sequence ID" value="ABP80651.1"/>
    <property type="molecule type" value="Genomic_DNA"/>
</dbReference>
<dbReference type="RefSeq" id="WP_011914105.1">
    <property type="nucleotide sequence ID" value="NC_009434.1"/>
</dbReference>
<dbReference type="SMR" id="A4VNV0"/>
<dbReference type="KEGG" id="psa:PST_3010"/>
<dbReference type="eggNOG" id="COG1570">
    <property type="taxonomic scope" value="Bacteria"/>
</dbReference>
<dbReference type="HOGENOM" id="CLU_023625_3_1_6"/>
<dbReference type="Proteomes" id="UP000000233">
    <property type="component" value="Chromosome"/>
</dbReference>
<dbReference type="GO" id="GO:0005737">
    <property type="term" value="C:cytoplasm"/>
    <property type="evidence" value="ECO:0007669"/>
    <property type="project" value="UniProtKB-SubCell"/>
</dbReference>
<dbReference type="GO" id="GO:0009318">
    <property type="term" value="C:exodeoxyribonuclease VII complex"/>
    <property type="evidence" value="ECO:0007669"/>
    <property type="project" value="InterPro"/>
</dbReference>
<dbReference type="GO" id="GO:0008855">
    <property type="term" value="F:exodeoxyribonuclease VII activity"/>
    <property type="evidence" value="ECO:0007669"/>
    <property type="project" value="UniProtKB-UniRule"/>
</dbReference>
<dbReference type="GO" id="GO:0003676">
    <property type="term" value="F:nucleic acid binding"/>
    <property type="evidence" value="ECO:0007669"/>
    <property type="project" value="InterPro"/>
</dbReference>
<dbReference type="GO" id="GO:0006308">
    <property type="term" value="P:DNA catabolic process"/>
    <property type="evidence" value="ECO:0007669"/>
    <property type="project" value="UniProtKB-UniRule"/>
</dbReference>
<dbReference type="CDD" id="cd04489">
    <property type="entry name" value="ExoVII_LU_OBF"/>
    <property type="match status" value="1"/>
</dbReference>
<dbReference type="Gene3D" id="2.40.50.1010">
    <property type="match status" value="1"/>
</dbReference>
<dbReference type="HAMAP" id="MF_00378">
    <property type="entry name" value="Exonuc_7_L"/>
    <property type="match status" value="1"/>
</dbReference>
<dbReference type="InterPro" id="IPR003753">
    <property type="entry name" value="Exonuc_VII_L"/>
</dbReference>
<dbReference type="InterPro" id="IPR020579">
    <property type="entry name" value="Exonuc_VII_lsu_C"/>
</dbReference>
<dbReference type="InterPro" id="IPR025824">
    <property type="entry name" value="OB-fold_nuc-bd_dom"/>
</dbReference>
<dbReference type="NCBIfam" id="TIGR00237">
    <property type="entry name" value="xseA"/>
    <property type="match status" value="1"/>
</dbReference>
<dbReference type="PANTHER" id="PTHR30008">
    <property type="entry name" value="EXODEOXYRIBONUCLEASE 7 LARGE SUBUNIT"/>
    <property type="match status" value="1"/>
</dbReference>
<dbReference type="PANTHER" id="PTHR30008:SF0">
    <property type="entry name" value="EXODEOXYRIBONUCLEASE 7 LARGE SUBUNIT"/>
    <property type="match status" value="1"/>
</dbReference>
<dbReference type="Pfam" id="PF02601">
    <property type="entry name" value="Exonuc_VII_L"/>
    <property type="match status" value="1"/>
</dbReference>
<dbReference type="Pfam" id="PF13742">
    <property type="entry name" value="tRNA_anti_2"/>
    <property type="match status" value="1"/>
</dbReference>
<dbReference type="SUPFAM" id="SSF57997">
    <property type="entry name" value="Tropomyosin"/>
    <property type="match status" value="1"/>
</dbReference>
<name>EX7L_STUS1</name>